<name>PUR7_RICCN</name>
<organism>
    <name type="scientific">Rickettsia conorii (strain ATCC VR-613 / Malish 7)</name>
    <dbReference type="NCBI Taxonomy" id="272944"/>
    <lineage>
        <taxon>Bacteria</taxon>
        <taxon>Pseudomonadati</taxon>
        <taxon>Pseudomonadota</taxon>
        <taxon>Alphaproteobacteria</taxon>
        <taxon>Rickettsiales</taxon>
        <taxon>Rickettsiaceae</taxon>
        <taxon>Rickettsieae</taxon>
        <taxon>Rickettsia</taxon>
        <taxon>spotted fever group</taxon>
    </lineage>
</organism>
<accession>Q92IX6</accession>
<protein>
    <recommendedName>
        <fullName evidence="1">Phosphoribosylaminoimidazole-succinocarboxamide synthase</fullName>
        <ecNumber evidence="1">6.3.2.6</ecNumber>
    </recommendedName>
    <alternativeName>
        <fullName evidence="1">SAICAR synthetase</fullName>
    </alternativeName>
</protein>
<dbReference type="EC" id="6.3.2.6" evidence="1"/>
<dbReference type="EMBL" id="AE006914">
    <property type="protein sequence ID" value="AAL02832.1"/>
    <property type="molecule type" value="Genomic_DNA"/>
</dbReference>
<dbReference type="PIR" id="F97736">
    <property type="entry name" value="F97736"/>
</dbReference>
<dbReference type="RefSeq" id="WP_004996420.1">
    <property type="nucleotide sequence ID" value="NC_003103.1"/>
</dbReference>
<dbReference type="SMR" id="Q92IX6"/>
<dbReference type="KEGG" id="rco:RC0294"/>
<dbReference type="HOGENOM" id="CLU_061495_2_0_5"/>
<dbReference type="UniPathway" id="UPA00074">
    <property type="reaction ID" value="UER00131"/>
</dbReference>
<dbReference type="Proteomes" id="UP000000816">
    <property type="component" value="Chromosome"/>
</dbReference>
<dbReference type="GO" id="GO:0005829">
    <property type="term" value="C:cytosol"/>
    <property type="evidence" value="ECO:0007669"/>
    <property type="project" value="TreeGrafter"/>
</dbReference>
<dbReference type="GO" id="GO:0005524">
    <property type="term" value="F:ATP binding"/>
    <property type="evidence" value="ECO:0007669"/>
    <property type="project" value="UniProtKB-KW"/>
</dbReference>
<dbReference type="GO" id="GO:0004639">
    <property type="term" value="F:phosphoribosylaminoimidazolesuccinocarboxamide synthase activity"/>
    <property type="evidence" value="ECO:0007669"/>
    <property type="project" value="UniProtKB-UniRule"/>
</dbReference>
<dbReference type="GO" id="GO:0006189">
    <property type="term" value="P:'de novo' IMP biosynthetic process"/>
    <property type="evidence" value="ECO:0007669"/>
    <property type="project" value="UniProtKB-UniRule"/>
</dbReference>
<dbReference type="GO" id="GO:0009236">
    <property type="term" value="P:cobalamin biosynthetic process"/>
    <property type="evidence" value="ECO:0007669"/>
    <property type="project" value="InterPro"/>
</dbReference>
<dbReference type="CDD" id="cd01415">
    <property type="entry name" value="SAICAR_synt_PurC"/>
    <property type="match status" value="1"/>
</dbReference>
<dbReference type="Gene3D" id="3.30.470.20">
    <property type="entry name" value="ATP-grasp fold, B domain"/>
    <property type="match status" value="1"/>
</dbReference>
<dbReference type="Gene3D" id="3.30.200.20">
    <property type="entry name" value="Phosphorylase Kinase, domain 1"/>
    <property type="match status" value="1"/>
</dbReference>
<dbReference type="HAMAP" id="MF_00137">
    <property type="entry name" value="SAICAR_synth"/>
    <property type="match status" value="1"/>
</dbReference>
<dbReference type="InterPro" id="IPR028923">
    <property type="entry name" value="SAICAR_synt/ADE2_N"/>
</dbReference>
<dbReference type="InterPro" id="IPR033934">
    <property type="entry name" value="SAICAR_synt_PurC"/>
</dbReference>
<dbReference type="InterPro" id="IPR050089">
    <property type="entry name" value="SAICAR_synthetase"/>
</dbReference>
<dbReference type="PANTHER" id="PTHR43599">
    <property type="entry name" value="MULTIFUNCTIONAL PROTEIN ADE2"/>
    <property type="match status" value="1"/>
</dbReference>
<dbReference type="PANTHER" id="PTHR43599:SF3">
    <property type="entry name" value="SI:DKEY-6E2.2"/>
    <property type="match status" value="1"/>
</dbReference>
<dbReference type="Pfam" id="PF01259">
    <property type="entry name" value="SAICAR_synt"/>
    <property type="match status" value="1"/>
</dbReference>
<dbReference type="SUPFAM" id="SSF56104">
    <property type="entry name" value="SAICAR synthase-like"/>
    <property type="match status" value="1"/>
</dbReference>
<gene>
    <name evidence="1" type="primary">purC</name>
    <name type="ordered locus">RC0294</name>
</gene>
<reference key="1">
    <citation type="journal article" date="2001" name="Science">
        <title>Mechanisms of evolution in Rickettsia conorii and R. prowazekii.</title>
        <authorList>
            <person name="Ogata H."/>
            <person name="Audic S."/>
            <person name="Renesto-Audiffren P."/>
            <person name="Fournier P.-E."/>
            <person name="Barbe V."/>
            <person name="Samson D."/>
            <person name="Roux V."/>
            <person name="Cossart P."/>
            <person name="Weissenbach J."/>
            <person name="Claverie J.-M."/>
            <person name="Raoult D."/>
        </authorList>
    </citation>
    <scope>NUCLEOTIDE SEQUENCE [LARGE SCALE GENOMIC DNA]</scope>
    <source>
        <strain>ATCC VR-613 / Malish 7</strain>
    </source>
</reference>
<sequence>MKKKLYEGSSKILYSAEEDFLLIMAFSDKAILETGEIVDISGKGVLNNNISSFLMDKLEMIGIENHFIEKINMREQLIQYVEVFPIQVIISSVACSRFVKEFGIDEGYVFDKPIIDFKVRSREFKYPIVNEYQILNFGWLTRDEIKAVKEQALRIYDFLSGLFIGVGIRLVECKLEFGRVFNGEESIIMLTDEISPDNCRLWHINSNEKLGFELLEKEPNKVFESYQLIADRLKEK</sequence>
<feature type="chain" id="PRO_0000100863" description="Phosphoribosylaminoimidazole-succinocarboxamide synthase">
    <location>
        <begin position="1"/>
        <end position="236"/>
    </location>
</feature>
<proteinExistence type="inferred from homology"/>
<evidence type="ECO:0000255" key="1">
    <source>
        <dbReference type="HAMAP-Rule" id="MF_00137"/>
    </source>
</evidence>
<comment type="catalytic activity">
    <reaction evidence="1">
        <text>5-amino-1-(5-phospho-D-ribosyl)imidazole-4-carboxylate + L-aspartate + ATP = (2S)-2-[5-amino-1-(5-phospho-beta-D-ribosyl)imidazole-4-carboxamido]succinate + ADP + phosphate + 2 H(+)</text>
        <dbReference type="Rhea" id="RHEA:22628"/>
        <dbReference type="ChEBI" id="CHEBI:15378"/>
        <dbReference type="ChEBI" id="CHEBI:29991"/>
        <dbReference type="ChEBI" id="CHEBI:30616"/>
        <dbReference type="ChEBI" id="CHEBI:43474"/>
        <dbReference type="ChEBI" id="CHEBI:58443"/>
        <dbReference type="ChEBI" id="CHEBI:77657"/>
        <dbReference type="ChEBI" id="CHEBI:456216"/>
        <dbReference type="EC" id="6.3.2.6"/>
    </reaction>
</comment>
<comment type="pathway">
    <text evidence="1">Purine metabolism; IMP biosynthesis via de novo pathway; 5-amino-1-(5-phospho-D-ribosyl)imidazole-4-carboxamide from 5-amino-1-(5-phospho-D-ribosyl)imidazole-4-carboxylate: step 1/2.</text>
</comment>
<comment type="similarity">
    <text evidence="1">Belongs to the SAICAR synthetase family.</text>
</comment>
<keyword id="KW-0067">ATP-binding</keyword>
<keyword id="KW-0436">Ligase</keyword>
<keyword id="KW-0547">Nucleotide-binding</keyword>
<keyword id="KW-0658">Purine biosynthesis</keyword>